<reference key="1">
    <citation type="submission" date="2007-10" db="EMBL/GenBank/DDBJ databases">
        <title>Complete sequence of Salinispora arenicola CNS-205.</title>
        <authorList>
            <consortium name="US DOE Joint Genome Institute"/>
            <person name="Copeland A."/>
            <person name="Lucas S."/>
            <person name="Lapidus A."/>
            <person name="Barry K."/>
            <person name="Glavina del Rio T."/>
            <person name="Dalin E."/>
            <person name="Tice H."/>
            <person name="Pitluck S."/>
            <person name="Foster B."/>
            <person name="Schmutz J."/>
            <person name="Larimer F."/>
            <person name="Land M."/>
            <person name="Hauser L."/>
            <person name="Kyrpides N."/>
            <person name="Ivanova N."/>
            <person name="Jensen P.R."/>
            <person name="Moore B.S."/>
            <person name="Penn K."/>
            <person name="Jenkins C."/>
            <person name="Udwary D."/>
            <person name="Xiang L."/>
            <person name="Gontang E."/>
            <person name="Richardson P."/>
        </authorList>
    </citation>
    <scope>NUCLEOTIDE SEQUENCE [LARGE SCALE GENOMIC DNA]</scope>
    <source>
        <strain>CNS-205</strain>
    </source>
</reference>
<feature type="chain" id="PRO_0000368737" description="ATP synthase subunit b">
    <location>
        <begin position="1"/>
        <end position="179"/>
    </location>
</feature>
<feature type="transmembrane region" description="Helical" evidence="1">
    <location>
        <begin position="23"/>
        <end position="43"/>
    </location>
</feature>
<protein>
    <recommendedName>
        <fullName evidence="1">ATP synthase subunit b</fullName>
    </recommendedName>
    <alternativeName>
        <fullName evidence="1">ATP synthase F(0) sector subunit b</fullName>
    </alternativeName>
    <alternativeName>
        <fullName evidence="1">ATPase subunit I</fullName>
    </alternativeName>
    <alternativeName>
        <fullName evidence="1">F-type ATPase subunit b</fullName>
        <shortName evidence="1">F-ATPase subunit b</shortName>
    </alternativeName>
</protein>
<keyword id="KW-0066">ATP synthesis</keyword>
<keyword id="KW-1003">Cell membrane</keyword>
<keyword id="KW-0138">CF(0)</keyword>
<keyword id="KW-0375">Hydrogen ion transport</keyword>
<keyword id="KW-0406">Ion transport</keyword>
<keyword id="KW-0472">Membrane</keyword>
<keyword id="KW-0812">Transmembrane</keyword>
<keyword id="KW-1133">Transmembrane helix</keyword>
<keyword id="KW-0813">Transport</keyword>
<sequence>MFFLAAEGGETSHSPILPVWQEIVVGLVAFGLLAFVLMKFVFPRMEQTFQARVDAIEGGIKRAEAAQAEANQLLEQYRAQLSEARSDAAKIRDDARADAEGIRQDILAKAREESDRIIAAGKEQLVAERATIVRELRTEVGTLAVDLASKIVGESLADEARRAGTVDRFLDGLESAGAR</sequence>
<gene>
    <name evidence="1" type="primary">atpF</name>
    <name type="ordered locus">Sare_4016</name>
</gene>
<organism>
    <name type="scientific">Salinispora arenicola (strain CNS-205)</name>
    <dbReference type="NCBI Taxonomy" id="391037"/>
    <lineage>
        <taxon>Bacteria</taxon>
        <taxon>Bacillati</taxon>
        <taxon>Actinomycetota</taxon>
        <taxon>Actinomycetes</taxon>
        <taxon>Micromonosporales</taxon>
        <taxon>Micromonosporaceae</taxon>
        <taxon>Salinispora</taxon>
    </lineage>
</organism>
<name>ATPF_SALAI</name>
<dbReference type="EMBL" id="CP000850">
    <property type="protein sequence ID" value="ABV99806.1"/>
    <property type="molecule type" value="Genomic_DNA"/>
</dbReference>
<dbReference type="SMR" id="A8M2J7"/>
<dbReference type="STRING" id="391037.Sare_4016"/>
<dbReference type="KEGG" id="saq:Sare_4016"/>
<dbReference type="PATRIC" id="fig|391037.6.peg.4053"/>
<dbReference type="eggNOG" id="COG0711">
    <property type="taxonomic scope" value="Bacteria"/>
</dbReference>
<dbReference type="HOGENOM" id="CLU_079215_5_1_11"/>
<dbReference type="OrthoDB" id="5243563at2"/>
<dbReference type="GO" id="GO:0005886">
    <property type="term" value="C:plasma membrane"/>
    <property type="evidence" value="ECO:0007669"/>
    <property type="project" value="UniProtKB-SubCell"/>
</dbReference>
<dbReference type="GO" id="GO:0045259">
    <property type="term" value="C:proton-transporting ATP synthase complex"/>
    <property type="evidence" value="ECO:0007669"/>
    <property type="project" value="UniProtKB-KW"/>
</dbReference>
<dbReference type="GO" id="GO:0046933">
    <property type="term" value="F:proton-transporting ATP synthase activity, rotational mechanism"/>
    <property type="evidence" value="ECO:0007669"/>
    <property type="project" value="UniProtKB-UniRule"/>
</dbReference>
<dbReference type="GO" id="GO:0046961">
    <property type="term" value="F:proton-transporting ATPase activity, rotational mechanism"/>
    <property type="evidence" value="ECO:0007669"/>
    <property type="project" value="TreeGrafter"/>
</dbReference>
<dbReference type="CDD" id="cd06503">
    <property type="entry name" value="ATP-synt_Fo_b"/>
    <property type="match status" value="1"/>
</dbReference>
<dbReference type="Gene3D" id="1.20.5.620">
    <property type="entry name" value="F1F0 ATP synthase subunit B, membrane domain"/>
    <property type="match status" value="1"/>
</dbReference>
<dbReference type="HAMAP" id="MF_01398">
    <property type="entry name" value="ATP_synth_b_bprime"/>
    <property type="match status" value="1"/>
</dbReference>
<dbReference type="InterPro" id="IPR028987">
    <property type="entry name" value="ATP_synth_B-like_membr_sf"/>
</dbReference>
<dbReference type="InterPro" id="IPR002146">
    <property type="entry name" value="ATP_synth_b/b'su_bac/chlpt"/>
</dbReference>
<dbReference type="InterPro" id="IPR005864">
    <property type="entry name" value="ATP_synth_F0_bsu_bac"/>
</dbReference>
<dbReference type="InterPro" id="IPR050059">
    <property type="entry name" value="ATP_synthase_B_chain"/>
</dbReference>
<dbReference type="NCBIfam" id="TIGR01144">
    <property type="entry name" value="ATP_synt_b"/>
    <property type="match status" value="1"/>
</dbReference>
<dbReference type="NCBIfam" id="NF004412">
    <property type="entry name" value="PRK05759.1-3"/>
    <property type="match status" value="1"/>
</dbReference>
<dbReference type="PANTHER" id="PTHR33445:SF1">
    <property type="entry name" value="ATP SYNTHASE SUBUNIT B"/>
    <property type="match status" value="1"/>
</dbReference>
<dbReference type="PANTHER" id="PTHR33445">
    <property type="entry name" value="ATP SYNTHASE SUBUNIT B', CHLOROPLASTIC"/>
    <property type="match status" value="1"/>
</dbReference>
<dbReference type="Pfam" id="PF00430">
    <property type="entry name" value="ATP-synt_B"/>
    <property type="match status" value="1"/>
</dbReference>
<dbReference type="SUPFAM" id="SSF81573">
    <property type="entry name" value="F1F0 ATP synthase subunit B, membrane domain"/>
    <property type="match status" value="1"/>
</dbReference>
<accession>A8M2J7</accession>
<comment type="function">
    <text evidence="1">F(1)F(0) ATP synthase produces ATP from ADP in the presence of a proton or sodium gradient. F-type ATPases consist of two structural domains, F(1) containing the extramembraneous catalytic core and F(0) containing the membrane proton channel, linked together by a central stalk and a peripheral stalk. During catalysis, ATP synthesis in the catalytic domain of F(1) is coupled via a rotary mechanism of the central stalk subunits to proton translocation.</text>
</comment>
<comment type="function">
    <text evidence="1">Component of the F(0) channel, it forms part of the peripheral stalk, linking F(1) to F(0).</text>
</comment>
<comment type="subunit">
    <text evidence="1">F-type ATPases have 2 components, F(1) - the catalytic core - and F(0) - the membrane proton channel. F(1) has five subunits: alpha(3), beta(3), gamma(1), delta(1), epsilon(1). F(0) has three main subunits: a(1), b(2) and c(10-14). The alpha and beta chains form an alternating ring which encloses part of the gamma chain. F(1) is attached to F(0) by a central stalk formed by the gamma and epsilon chains, while a peripheral stalk is formed by the delta and b chains.</text>
</comment>
<comment type="subcellular location">
    <subcellularLocation>
        <location evidence="1">Cell membrane</location>
        <topology evidence="1">Single-pass membrane protein</topology>
    </subcellularLocation>
</comment>
<comment type="similarity">
    <text evidence="1">Belongs to the ATPase B chain family.</text>
</comment>
<proteinExistence type="inferred from homology"/>
<evidence type="ECO:0000255" key="1">
    <source>
        <dbReference type="HAMAP-Rule" id="MF_01398"/>
    </source>
</evidence>